<proteinExistence type="inferred from homology"/>
<evidence type="ECO:0000255" key="1">
    <source>
        <dbReference type="HAMAP-Rule" id="MF_01363"/>
    </source>
</evidence>
<evidence type="ECO:0000305" key="2"/>
<protein>
    <recommendedName>
        <fullName evidence="1">Large ribosomal subunit protein bL21</fullName>
    </recommendedName>
    <alternativeName>
        <fullName evidence="2">50S ribosomal protein L21</fullName>
    </alternativeName>
</protein>
<name>RL21_DICT6</name>
<accession>B5YEQ3</accession>
<gene>
    <name evidence="1" type="primary">rplU</name>
    <name type="ordered locus">DICTH_1177</name>
</gene>
<reference key="1">
    <citation type="journal article" date="2014" name="Genome Announc.">
        <title>Complete Genome Sequence of the Extreme Thermophile Dictyoglomus thermophilum H-6-12.</title>
        <authorList>
            <person name="Coil D.A."/>
            <person name="Badger J.H."/>
            <person name="Forberger H.C."/>
            <person name="Riggs F."/>
            <person name="Madupu R."/>
            <person name="Fedorova N."/>
            <person name="Ward N."/>
            <person name="Robb F.T."/>
            <person name="Eisen J.A."/>
        </authorList>
    </citation>
    <scope>NUCLEOTIDE SEQUENCE [LARGE SCALE GENOMIC DNA]</scope>
    <source>
        <strain>ATCC 35947 / DSM 3960 / H-6-12</strain>
    </source>
</reference>
<sequence>MFVVVETGGKQYKLSVGSTVRVEKLQANVGDEVVLDKVLLVGKDDEVLIGQPYVEGAKVIAEVVKQDKYPKVIVFKFKRKKHYRRKYGHRQPYTQLSVKEIVLPQ</sequence>
<feature type="chain" id="PRO_1000143786" description="Large ribosomal subunit protein bL21">
    <location>
        <begin position="1"/>
        <end position="105"/>
    </location>
</feature>
<organism>
    <name type="scientific">Dictyoglomus thermophilum (strain ATCC 35947 / DSM 3960 / H-6-12)</name>
    <dbReference type="NCBI Taxonomy" id="309799"/>
    <lineage>
        <taxon>Bacteria</taxon>
        <taxon>Pseudomonadati</taxon>
        <taxon>Dictyoglomota</taxon>
        <taxon>Dictyoglomia</taxon>
        <taxon>Dictyoglomales</taxon>
        <taxon>Dictyoglomaceae</taxon>
        <taxon>Dictyoglomus</taxon>
    </lineage>
</organism>
<dbReference type="EMBL" id="CP001146">
    <property type="protein sequence ID" value="ACI18688.1"/>
    <property type="molecule type" value="Genomic_DNA"/>
</dbReference>
<dbReference type="RefSeq" id="WP_012547320.1">
    <property type="nucleotide sequence ID" value="NC_011297.1"/>
</dbReference>
<dbReference type="SMR" id="B5YEQ3"/>
<dbReference type="STRING" id="309799.DICTH_1177"/>
<dbReference type="PaxDb" id="309799-DICTH_1177"/>
<dbReference type="KEGG" id="dth:DICTH_1177"/>
<dbReference type="eggNOG" id="COG0261">
    <property type="taxonomic scope" value="Bacteria"/>
</dbReference>
<dbReference type="HOGENOM" id="CLU_061463_3_2_0"/>
<dbReference type="Proteomes" id="UP000001733">
    <property type="component" value="Chromosome"/>
</dbReference>
<dbReference type="GO" id="GO:0005737">
    <property type="term" value="C:cytoplasm"/>
    <property type="evidence" value="ECO:0007669"/>
    <property type="project" value="UniProtKB-ARBA"/>
</dbReference>
<dbReference type="GO" id="GO:1990904">
    <property type="term" value="C:ribonucleoprotein complex"/>
    <property type="evidence" value="ECO:0007669"/>
    <property type="project" value="UniProtKB-KW"/>
</dbReference>
<dbReference type="GO" id="GO:0005840">
    <property type="term" value="C:ribosome"/>
    <property type="evidence" value="ECO:0007669"/>
    <property type="project" value="UniProtKB-KW"/>
</dbReference>
<dbReference type="GO" id="GO:0019843">
    <property type="term" value="F:rRNA binding"/>
    <property type="evidence" value="ECO:0007669"/>
    <property type="project" value="UniProtKB-UniRule"/>
</dbReference>
<dbReference type="GO" id="GO:0003735">
    <property type="term" value="F:structural constituent of ribosome"/>
    <property type="evidence" value="ECO:0007669"/>
    <property type="project" value="InterPro"/>
</dbReference>
<dbReference type="GO" id="GO:0006412">
    <property type="term" value="P:translation"/>
    <property type="evidence" value="ECO:0007669"/>
    <property type="project" value="UniProtKB-UniRule"/>
</dbReference>
<dbReference type="HAMAP" id="MF_01363">
    <property type="entry name" value="Ribosomal_bL21"/>
    <property type="match status" value="1"/>
</dbReference>
<dbReference type="InterPro" id="IPR028909">
    <property type="entry name" value="bL21-like"/>
</dbReference>
<dbReference type="InterPro" id="IPR036164">
    <property type="entry name" value="bL21-like_sf"/>
</dbReference>
<dbReference type="InterPro" id="IPR001787">
    <property type="entry name" value="Ribosomal_bL21"/>
</dbReference>
<dbReference type="InterPro" id="IPR018258">
    <property type="entry name" value="Ribosomal_bL21_CS"/>
</dbReference>
<dbReference type="NCBIfam" id="TIGR00061">
    <property type="entry name" value="L21"/>
    <property type="match status" value="1"/>
</dbReference>
<dbReference type="PANTHER" id="PTHR21349">
    <property type="entry name" value="50S RIBOSOMAL PROTEIN L21"/>
    <property type="match status" value="1"/>
</dbReference>
<dbReference type="PANTHER" id="PTHR21349:SF0">
    <property type="entry name" value="LARGE RIBOSOMAL SUBUNIT PROTEIN BL21M"/>
    <property type="match status" value="1"/>
</dbReference>
<dbReference type="Pfam" id="PF00829">
    <property type="entry name" value="Ribosomal_L21p"/>
    <property type="match status" value="1"/>
</dbReference>
<dbReference type="SUPFAM" id="SSF141091">
    <property type="entry name" value="L21p-like"/>
    <property type="match status" value="1"/>
</dbReference>
<dbReference type="PROSITE" id="PS01169">
    <property type="entry name" value="RIBOSOMAL_L21"/>
    <property type="match status" value="1"/>
</dbReference>
<comment type="function">
    <text evidence="1">This protein binds to 23S rRNA in the presence of protein L20.</text>
</comment>
<comment type="subunit">
    <text evidence="1">Part of the 50S ribosomal subunit. Contacts protein L20.</text>
</comment>
<comment type="similarity">
    <text evidence="1">Belongs to the bacterial ribosomal protein bL21 family.</text>
</comment>
<keyword id="KW-0687">Ribonucleoprotein</keyword>
<keyword id="KW-0689">Ribosomal protein</keyword>
<keyword id="KW-0694">RNA-binding</keyword>
<keyword id="KW-0699">rRNA-binding</keyword>